<sequence length="349" mass="38176">METPPVNTIGEKDTSQPQQEWEKNLRENLDSVIQIRQQPRDPPTETLELEVSPDPASQILEHTQGAEKLVAELEGDSHKSHGSTSQMPEALQASDLWYCPDGSFVKKIVIRGHGLDKPKLGSCCRVLALGFPFGSGPPEGWTELTMGVGPWREETWGELIEKCLESMCQGEEAELQLPGHSGPPVRLTLASFTQGRDSWELETSEKEALAREERARGTELFRAGNPEGAARCYGRALRLLLTLPPPGPPERTVLHANLAACQLLLGQPQLAAQSCDRVLEREPGHLKALYRRGVAQAALGNLEKATADLKKVLAIDPKNRAAQEELGKVVIQGKNQDAGLAQGLRKMFG</sequence>
<name>FKBPL_HUMAN</name>
<proteinExistence type="evidence at protein level"/>
<comment type="function">
    <text evidence="3">May be involved in response to X-ray. Regulates p21 protein stability by binding to Hsp90 and p21.</text>
</comment>
<comment type="subunit">
    <text>Forms a ternary complex with CDKN1A/p21 and HSP90AB1/Hsp90.</text>
</comment>
<comment type="interaction">
    <interactant intactId="EBI-719882">
        <id>Q9UIM3</id>
    </interactant>
    <interactant intactId="EBI-9381820">
        <id>Q8WVL7</id>
        <label>ANKRD49</label>
    </interactant>
    <organismsDiffer>false</organismsDiffer>
    <experiments>8</experiments>
</comment>
<comment type="interaction">
    <interactant intactId="EBI-719882">
        <id>Q9UIM3</id>
    </interactant>
    <interactant intactId="EBI-739580">
        <id>Q13137</id>
        <label>CALCOCO2</label>
    </interactant>
    <organismsDiffer>false</organismsDiffer>
    <experiments>3</experiments>
</comment>
<comment type="tissue specificity">
    <text evidence="3">Ubiquitously expressed with higher levels in testis.</text>
</comment>
<comment type="sequence caution" evidence="4">
    <conflict type="frameshift">
        <sequence resource="EMBL-CDS" id="BAB15663"/>
    </conflict>
</comment>
<comment type="sequence caution" evidence="4">
    <conflict type="frameshift">
        <sequence resource="EMBL-CDS" id="CAG33655"/>
    </conflict>
</comment>
<gene>
    <name type="primary">FKBPL</name>
    <name type="synonym">DIR1</name>
    <name type="synonym">NG7</name>
</gene>
<protein>
    <recommendedName>
        <fullName>FK506-binding protein-like</fullName>
    </recommendedName>
    <alternativeName>
        <fullName>WAF-1/CIP1 stabilizing protein 39</fullName>
        <shortName>WISp39</shortName>
    </alternativeName>
</protein>
<keyword id="KW-0597">Phosphoprotein</keyword>
<keyword id="KW-1267">Proteomics identification</keyword>
<keyword id="KW-1185">Reference proteome</keyword>
<keyword id="KW-0677">Repeat</keyword>
<keyword id="KW-0802">TPR repeat</keyword>
<reference key="1">
    <citation type="journal article" date="1999" name="Radiat. Res.">
        <title>A novel human stress response-related gene with a potential role in induced radioresistance.</title>
        <authorList>
            <person name="Robson T."/>
            <person name="Joiner M.C."/>
            <person name="Wilson G.D."/>
            <person name="McCullough W."/>
            <person name="Price M.E."/>
            <person name="Logan I."/>
            <person name="Jones H."/>
            <person name="McKeown S.R."/>
            <person name="Hirst D.G."/>
        </authorList>
    </citation>
    <scope>NUCLEOTIDE SEQUENCE [GENOMIC DNA]</scope>
    <source>
        <tissue>Lung</tissue>
    </source>
</reference>
<reference key="2">
    <citation type="journal article" date="2004" name="Nat. Genet.">
        <title>Complete sequencing and characterization of 21,243 full-length human cDNAs.</title>
        <authorList>
            <person name="Ota T."/>
            <person name="Suzuki Y."/>
            <person name="Nishikawa T."/>
            <person name="Otsuki T."/>
            <person name="Sugiyama T."/>
            <person name="Irie R."/>
            <person name="Wakamatsu A."/>
            <person name="Hayashi K."/>
            <person name="Sato H."/>
            <person name="Nagai K."/>
            <person name="Kimura K."/>
            <person name="Makita H."/>
            <person name="Sekine M."/>
            <person name="Obayashi M."/>
            <person name="Nishi T."/>
            <person name="Shibahara T."/>
            <person name="Tanaka T."/>
            <person name="Ishii S."/>
            <person name="Yamamoto J."/>
            <person name="Saito K."/>
            <person name="Kawai Y."/>
            <person name="Isono Y."/>
            <person name="Nakamura Y."/>
            <person name="Nagahari K."/>
            <person name="Murakami K."/>
            <person name="Yasuda T."/>
            <person name="Iwayanagi T."/>
            <person name="Wagatsuma M."/>
            <person name="Shiratori A."/>
            <person name="Sudo H."/>
            <person name="Hosoiri T."/>
            <person name="Kaku Y."/>
            <person name="Kodaira H."/>
            <person name="Kondo H."/>
            <person name="Sugawara M."/>
            <person name="Takahashi M."/>
            <person name="Kanda K."/>
            <person name="Yokoi T."/>
            <person name="Furuya T."/>
            <person name="Kikkawa E."/>
            <person name="Omura Y."/>
            <person name="Abe K."/>
            <person name="Kamihara K."/>
            <person name="Katsuta N."/>
            <person name="Sato K."/>
            <person name="Tanikawa M."/>
            <person name="Yamazaki M."/>
            <person name="Ninomiya K."/>
            <person name="Ishibashi T."/>
            <person name="Yamashita H."/>
            <person name="Murakawa K."/>
            <person name="Fujimori K."/>
            <person name="Tanai H."/>
            <person name="Kimata M."/>
            <person name="Watanabe M."/>
            <person name="Hiraoka S."/>
            <person name="Chiba Y."/>
            <person name="Ishida S."/>
            <person name="Ono Y."/>
            <person name="Takiguchi S."/>
            <person name="Watanabe S."/>
            <person name="Yosida M."/>
            <person name="Hotuta T."/>
            <person name="Kusano J."/>
            <person name="Kanehori K."/>
            <person name="Takahashi-Fujii A."/>
            <person name="Hara H."/>
            <person name="Tanase T.-O."/>
            <person name="Nomura Y."/>
            <person name="Togiya S."/>
            <person name="Komai F."/>
            <person name="Hara R."/>
            <person name="Takeuchi K."/>
            <person name="Arita M."/>
            <person name="Imose N."/>
            <person name="Musashino K."/>
            <person name="Yuuki H."/>
            <person name="Oshima A."/>
            <person name="Sasaki N."/>
            <person name="Aotsuka S."/>
            <person name="Yoshikawa Y."/>
            <person name="Matsunawa H."/>
            <person name="Ichihara T."/>
            <person name="Shiohata N."/>
            <person name="Sano S."/>
            <person name="Moriya S."/>
            <person name="Momiyama H."/>
            <person name="Satoh N."/>
            <person name="Takami S."/>
            <person name="Terashima Y."/>
            <person name="Suzuki O."/>
            <person name="Nakagawa S."/>
            <person name="Senoh A."/>
            <person name="Mizoguchi H."/>
            <person name="Goto Y."/>
            <person name="Shimizu F."/>
            <person name="Wakebe H."/>
            <person name="Hishigaki H."/>
            <person name="Watanabe T."/>
            <person name="Sugiyama A."/>
            <person name="Takemoto M."/>
            <person name="Kawakami B."/>
            <person name="Yamazaki M."/>
            <person name="Watanabe K."/>
            <person name="Kumagai A."/>
            <person name="Itakura S."/>
            <person name="Fukuzumi Y."/>
            <person name="Fujimori Y."/>
            <person name="Komiyama M."/>
            <person name="Tashiro H."/>
            <person name="Tanigami A."/>
            <person name="Fujiwara T."/>
            <person name="Ono T."/>
            <person name="Yamada K."/>
            <person name="Fujii Y."/>
            <person name="Ozaki K."/>
            <person name="Hirao M."/>
            <person name="Ohmori Y."/>
            <person name="Kawabata A."/>
            <person name="Hikiji T."/>
            <person name="Kobatake N."/>
            <person name="Inagaki H."/>
            <person name="Ikema Y."/>
            <person name="Okamoto S."/>
            <person name="Okitani R."/>
            <person name="Kawakami T."/>
            <person name="Noguchi S."/>
            <person name="Itoh T."/>
            <person name="Shigeta K."/>
            <person name="Senba T."/>
            <person name="Matsumura K."/>
            <person name="Nakajima Y."/>
            <person name="Mizuno T."/>
            <person name="Morinaga M."/>
            <person name="Sasaki M."/>
            <person name="Togashi T."/>
            <person name="Oyama M."/>
            <person name="Hata H."/>
            <person name="Watanabe M."/>
            <person name="Komatsu T."/>
            <person name="Mizushima-Sugano J."/>
            <person name="Satoh T."/>
            <person name="Shirai Y."/>
            <person name="Takahashi Y."/>
            <person name="Nakagawa K."/>
            <person name="Okumura K."/>
            <person name="Nagase T."/>
            <person name="Nomura N."/>
            <person name="Kikuchi H."/>
            <person name="Masuho Y."/>
            <person name="Yamashita R."/>
            <person name="Nakai K."/>
            <person name="Yada T."/>
            <person name="Nakamura Y."/>
            <person name="Ohara O."/>
            <person name="Isogai T."/>
            <person name="Sugano S."/>
        </authorList>
    </citation>
    <scope>NUCLEOTIDE SEQUENCE [LARGE SCALE MRNA]</scope>
    <source>
        <tissue>Small intestine</tissue>
    </source>
</reference>
<reference key="3">
    <citation type="journal article" date="2003" name="Genome Res.">
        <title>Analysis of the gene-dense major histocompatibility complex class III region and its comparison to mouse.</title>
        <authorList>
            <person name="Xie T."/>
            <person name="Rowen L."/>
            <person name="Aguado B."/>
            <person name="Ahearn M.E."/>
            <person name="Madan A."/>
            <person name="Qin S."/>
            <person name="Campbell R.D."/>
            <person name="Hood L."/>
        </authorList>
    </citation>
    <scope>NUCLEOTIDE SEQUENCE [LARGE SCALE GENOMIC DNA]</scope>
</reference>
<reference key="4">
    <citation type="journal article" date="2003" name="Nature">
        <title>The DNA sequence and analysis of human chromosome 6.</title>
        <authorList>
            <person name="Mungall A.J."/>
            <person name="Palmer S.A."/>
            <person name="Sims S.K."/>
            <person name="Edwards C.A."/>
            <person name="Ashurst J.L."/>
            <person name="Wilming L."/>
            <person name="Jones M.C."/>
            <person name="Horton R."/>
            <person name="Hunt S.E."/>
            <person name="Scott C.E."/>
            <person name="Gilbert J.G.R."/>
            <person name="Clamp M.E."/>
            <person name="Bethel G."/>
            <person name="Milne S."/>
            <person name="Ainscough R."/>
            <person name="Almeida J.P."/>
            <person name="Ambrose K.D."/>
            <person name="Andrews T.D."/>
            <person name="Ashwell R.I.S."/>
            <person name="Babbage A.K."/>
            <person name="Bagguley C.L."/>
            <person name="Bailey J."/>
            <person name="Banerjee R."/>
            <person name="Barker D.J."/>
            <person name="Barlow K.F."/>
            <person name="Bates K."/>
            <person name="Beare D.M."/>
            <person name="Beasley H."/>
            <person name="Beasley O."/>
            <person name="Bird C.P."/>
            <person name="Blakey S.E."/>
            <person name="Bray-Allen S."/>
            <person name="Brook J."/>
            <person name="Brown A.J."/>
            <person name="Brown J.Y."/>
            <person name="Burford D.C."/>
            <person name="Burrill W."/>
            <person name="Burton J."/>
            <person name="Carder C."/>
            <person name="Carter N.P."/>
            <person name="Chapman J.C."/>
            <person name="Clark S.Y."/>
            <person name="Clark G."/>
            <person name="Clee C.M."/>
            <person name="Clegg S."/>
            <person name="Cobley V."/>
            <person name="Collier R.E."/>
            <person name="Collins J.E."/>
            <person name="Colman L.K."/>
            <person name="Corby N.R."/>
            <person name="Coville G.J."/>
            <person name="Culley K.M."/>
            <person name="Dhami P."/>
            <person name="Davies J."/>
            <person name="Dunn M."/>
            <person name="Earthrowl M.E."/>
            <person name="Ellington A.E."/>
            <person name="Evans K.A."/>
            <person name="Faulkner L."/>
            <person name="Francis M.D."/>
            <person name="Frankish A."/>
            <person name="Frankland J."/>
            <person name="French L."/>
            <person name="Garner P."/>
            <person name="Garnett J."/>
            <person name="Ghori M.J."/>
            <person name="Gilby L.M."/>
            <person name="Gillson C.J."/>
            <person name="Glithero R.J."/>
            <person name="Grafham D.V."/>
            <person name="Grant M."/>
            <person name="Gribble S."/>
            <person name="Griffiths C."/>
            <person name="Griffiths M.N.D."/>
            <person name="Hall R."/>
            <person name="Halls K.S."/>
            <person name="Hammond S."/>
            <person name="Harley J.L."/>
            <person name="Hart E.A."/>
            <person name="Heath P.D."/>
            <person name="Heathcott R."/>
            <person name="Holmes S.J."/>
            <person name="Howden P.J."/>
            <person name="Howe K.L."/>
            <person name="Howell G.R."/>
            <person name="Huckle E."/>
            <person name="Humphray S.J."/>
            <person name="Humphries M.D."/>
            <person name="Hunt A.R."/>
            <person name="Johnson C.M."/>
            <person name="Joy A.A."/>
            <person name="Kay M."/>
            <person name="Keenan S.J."/>
            <person name="Kimberley A.M."/>
            <person name="King A."/>
            <person name="Laird G.K."/>
            <person name="Langford C."/>
            <person name="Lawlor S."/>
            <person name="Leongamornlert D.A."/>
            <person name="Leversha M."/>
            <person name="Lloyd C.R."/>
            <person name="Lloyd D.M."/>
            <person name="Loveland J.E."/>
            <person name="Lovell J."/>
            <person name="Martin S."/>
            <person name="Mashreghi-Mohammadi M."/>
            <person name="Maslen G.L."/>
            <person name="Matthews L."/>
            <person name="McCann O.T."/>
            <person name="McLaren S.J."/>
            <person name="McLay K."/>
            <person name="McMurray A."/>
            <person name="Moore M.J.F."/>
            <person name="Mullikin J.C."/>
            <person name="Niblett D."/>
            <person name="Nickerson T."/>
            <person name="Novik K.L."/>
            <person name="Oliver K."/>
            <person name="Overton-Larty E.K."/>
            <person name="Parker A."/>
            <person name="Patel R."/>
            <person name="Pearce A.V."/>
            <person name="Peck A.I."/>
            <person name="Phillimore B.J.C.T."/>
            <person name="Phillips S."/>
            <person name="Plumb R.W."/>
            <person name="Porter K.M."/>
            <person name="Ramsey Y."/>
            <person name="Ranby S.A."/>
            <person name="Rice C.M."/>
            <person name="Ross M.T."/>
            <person name="Searle S.M."/>
            <person name="Sehra H.K."/>
            <person name="Sheridan E."/>
            <person name="Skuce C.D."/>
            <person name="Smith S."/>
            <person name="Smith M."/>
            <person name="Spraggon L."/>
            <person name="Squares S.L."/>
            <person name="Steward C.A."/>
            <person name="Sycamore N."/>
            <person name="Tamlyn-Hall G."/>
            <person name="Tester J."/>
            <person name="Theaker A.J."/>
            <person name="Thomas D.W."/>
            <person name="Thorpe A."/>
            <person name="Tracey A."/>
            <person name="Tromans A."/>
            <person name="Tubby B."/>
            <person name="Wall M."/>
            <person name="Wallis J.M."/>
            <person name="West A.P."/>
            <person name="White S.S."/>
            <person name="Whitehead S.L."/>
            <person name="Whittaker H."/>
            <person name="Wild A."/>
            <person name="Willey D.J."/>
            <person name="Wilmer T.E."/>
            <person name="Wood J.M."/>
            <person name="Wray P.W."/>
            <person name="Wyatt J.C."/>
            <person name="Young L."/>
            <person name="Younger R.M."/>
            <person name="Bentley D.R."/>
            <person name="Coulson A."/>
            <person name="Durbin R.M."/>
            <person name="Hubbard T."/>
            <person name="Sulston J.E."/>
            <person name="Dunham I."/>
            <person name="Rogers J."/>
            <person name="Beck S."/>
        </authorList>
    </citation>
    <scope>NUCLEOTIDE SEQUENCE [LARGE SCALE GENOMIC DNA]</scope>
    <scope>VARIANT THR-90</scope>
</reference>
<reference key="5">
    <citation type="submission" date="2005-07" db="EMBL/GenBank/DDBJ databases">
        <authorList>
            <person name="Mural R.J."/>
            <person name="Istrail S."/>
            <person name="Sutton G.G."/>
            <person name="Florea L."/>
            <person name="Halpern A.L."/>
            <person name="Mobarry C.M."/>
            <person name="Lippert R."/>
            <person name="Walenz B."/>
            <person name="Shatkay H."/>
            <person name="Dew I."/>
            <person name="Miller J.R."/>
            <person name="Flanigan M.J."/>
            <person name="Edwards N.J."/>
            <person name="Bolanos R."/>
            <person name="Fasulo D."/>
            <person name="Halldorsson B.V."/>
            <person name="Hannenhalli S."/>
            <person name="Turner R."/>
            <person name="Yooseph S."/>
            <person name="Lu F."/>
            <person name="Nusskern D.R."/>
            <person name="Shue B.C."/>
            <person name="Zheng X.H."/>
            <person name="Zhong F."/>
            <person name="Delcher A.L."/>
            <person name="Huson D.H."/>
            <person name="Kravitz S.A."/>
            <person name="Mouchard L."/>
            <person name="Reinert K."/>
            <person name="Remington K.A."/>
            <person name="Clark A.G."/>
            <person name="Waterman M.S."/>
            <person name="Eichler E.E."/>
            <person name="Adams M.D."/>
            <person name="Hunkapiller M.W."/>
            <person name="Myers E.W."/>
            <person name="Venter J.C."/>
        </authorList>
    </citation>
    <scope>NUCLEOTIDE SEQUENCE [LARGE SCALE GENOMIC DNA]</scope>
</reference>
<reference key="6">
    <citation type="journal article" date="2004" name="Genome Res.">
        <title>The status, quality, and expansion of the NIH full-length cDNA project: the Mammalian Gene Collection (MGC).</title>
        <authorList>
            <consortium name="The MGC Project Team"/>
        </authorList>
    </citation>
    <scope>NUCLEOTIDE SEQUENCE [LARGE SCALE MRNA]</scope>
    <source>
        <tissue>Lung</tissue>
        <tissue>Ovary</tissue>
    </source>
</reference>
<reference key="7">
    <citation type="submission" date="2004-06" db="EMBL/GenBank/DDBJ databases">
        <title>Cloning of human full open reading frames in Gateway(TM) system entry vector (pDONR201).</title>
        <authorList>
            <person name="Ebert L."/>
            <person name="Schick M."/>
            <person name="Neubert P."/>
            <person name="Schatten R."/>
            <person name="Henze S."/>
            <person name="Korn B."/>
        </authorList>
    </citation>
    <scope>NUCLEOTIDE SEQUENCE [LARGE SCALE MRNA] OF 1-203</scope>
</reference>
<reference key="8">
    <citation type="journal article" date="2005" name="Mol. Cell">
        <title>Regulation of p21(WAF1/CIP1) stability by WISp39, a Hsp90 binding TPR protein.</title>
        <authorList>
            <person name="Jascur T."/>
            <person name="Brickner H."/>
            <person name="Salles-Passador I."/>
            <person name="Barbier V."/>
            <person name="El Khissiin A."/>
            <person name="Smith B."/>
            <person name="Fotedar R."/>
            <person name="Fotedar A."/>
        </authorList>
    </citation>
    <scope>FUNCTION</scope>
    <scope>TISSUE SPECIFICITY</scope>
    <scope>MUTAGENESIS OF LYS-287 AND ARG-291</scope>
    <scope>INTERACTION WITH CDKN1A AND HSP90AB1</scope>
</reference>
<reference key="9">
    <citation type="journal article" date="2013" name="J. Proteome Res.">
        <title>Toward a comprehensive characterization of a human cancer cell phosphoproteome.</title>
        <authorList>
            <person name="Zhou H."/>
            <person name="Di Palma S."/>
            <person name="Preisinger C."/>
            <person name="Peng M."/>
            <person name="Polat A.N."/>
            <person name="Heck A.J."/>
            <person name="Mohammed S."/>
        </authorList>
    </citation>
    <scope>PHOSPHORYLATION [LARGE SCALE ANALYSIS] AT THR-3</scope>
    <scope>IDENTIFICATION BY MASS SPECTROMETRY [LARGE SCALE ANALYSIS]</scope>
    <source>
        <tissue>Erythroleukemia</tissue>
    </source>
</reference>
<organism>
    <name type="scientific">Homo sapiens</name>
    <name type="common">Human</name>
    <dbReference type="NCBI Taxonomy" id="9606"/>
    <lineage>
        <taxon>Eukaryota</taxon>
        <taxon>Metazoa</taxon>
        <taxon>Chordata</taxon>
        <taxon>Craniata</taxon>
        <taxon>Vertebrata</taxon>
        <taxon>Euteleostomi</taxon>
        <taxon>Mammalia</taxon>
        <taxon>Eutheria</taxon>
        <taxon>Euarchontoglires</taxon>
        <taxon>Primates</taxon>
        <taxon>Haplorrhini</taxon>
        <taxon>Catarrhini</taxon>
        <taxon>Hominidae</taxon>
        <taxon>Homo</taxon>
    </lineage>
</organism>
<accession>Q9UIM3</accession>
<accession>A8K5V3</accession>
<accession>B0UYX8</accession>
<accession>Q9H5G3</accession>
<dbReference type="EMBL" id="AF139374">
    <property type="protein sequence ID" value="AAF67785.1"/>
    <property type="molecule type" value="Genomic_DNA"/>
</dbReference>
<dbReference type="EMBL" id="AK027119">
    <property type="protein sequence ID" value="BAB15663.1"/>
    <property type="status" value="ALT_FRAME"/>
    <property type="molecule type" value="mRNA"/>
</dbReference>
<dbReference type="EMBL" id="AK291418">
    <property type="protein sequence ID" value="BAF84107.1"/>
    <property type="molecule type" value="mRNA"/>
</dbReference>
<dbReference type="EMBL" id="U89337">
    <property type="protein sequence ID" value="AAF04864.1"/>
    <property type="molecule type" value="Genomic_DNA"/>
</dbReference>
<dbReference type="EMBL" id="AL662828">
    <property type="status" value="NOT_ANNOTATED_CDS"/>
    <property type="molecule type" value="Genomic_DNA"/>
</dbReference>
<dbReference type="EMBL" id="AL662884">
    <property type="status" value="NOT_ANNOTATED_CDS"/>
    <property type="molecule type" value="Genomic_DNA"/>
</dbReference>
<dbReference type="EMBL" id="CR753803">
    <property type="status" value="NOT_ANNOTATED_CDS"/>
    <property type="molecule type" value="Genomic_DNA"/>
</dbReference>
<dbReference type="EMBL" id="CR925796">
    <property type="status" value="NOT_ANNOTATED_CDS"/>
    <property type="molecule type" value="Genomic_DNA"/>
</dbReference>
<dbReference type="EMBL" id="CH471081">
    <property type="protein sequence ID" value="EAX03586.1"/>
    <property type="molecule type" value="Genomic_DNA"/>
</dbReference>
<dbReference type="EMBL" id="BC004168">
    <property type="protein sequence ID" value="AAH04168.1"/>
    <property type="molecule type" value="mRNA"/>
</dbReference>
<dbReference type="EMBL" id="BC011966">
    <property type="protein sequence ID" value="AAH11966.1"/>
    <property type="molecule type" value="mRNA"/>
</dbReference>
<dbReference type="EMBL" id="CR457374">
    <property type="protein sequence ID" value="CAG33655.1"/>
    <property type="status" value="ALT_FRAME"/>
    <property type="molecule type" value="mRNA"/>
</dbReference>
<dbReference type="CCDS" id="CCDS4738.1"/>
<dbReference type="RefSeq" id="NP_071393.2">
    <property type="nucleotide sequence ID" value="NM_022110.3"/>
</dbReference>
<dbReference type="SMR" id="Q9UIM3"/>
<dbReference type="BioGRID" id="122007">
    <property type="interactions" value="31"/>
</dbReference>
<dbReference type="CORUM" id="Q9UIM3"/>
<dbReference type="FunCoup" id="Q9UIM3">
    <property type="interactions" value="289"/>
</dbReference>
<dbReference type="IntAct" id="Q9UIM3">
    <property type="interactions" value="70"/>
</dbReference>
<dbReference type="STRING" id="9606.ENSP00000364298"/>
<dbReference type="iPTMnet" id="Q9UIM3"/>
<dbReference type="PhosphoSitePlus" id="Q9UIM3"/>
<dbReference type="BioMuta" id="FKBPL"/>
<dbReference type="DMDM" id="74762773"/>
<dbReference type="jPOST" id="Q9UIM3"/>
<dbReference type="MassIVE" id="Q9UIM3"/>
<dbReference type="PaxDb" id="9606-ENSP00000364298"/>
<dbReference type="PeptideAtlas" id="Q9UIM3"/>
<dbReference type="ProteomicsDB" id="84550"/>
<dbReference type="Pumba" id="Q9UIM3"/>
<dbReference type="Antibodypedia" id="28379">
    <property type="antibodies" value="284 antibodies from 29 providers"/>
</dbReference>
<dbReference type="DNASU" id="63943"/>
<dbReference type="Ensembl" id="ENST00000375156.4">
    <property type="protein sequence ID" value="ENSP00000364298.3"/>
    <property type="gene ID" value="ENSG00000204315.4"/>
</dbReference>
<dbReference type="Ensembl" id="ENST00000425378.2">
    <property type="protein sequence ID" value="ENSP00000397530.2"/>
    <property type="gene ID" value="ENSG00000230907.2"/>
</dbReference>
<dbReference type="Ensembl" id="ENST00000443350.2">
    <property type="protein sequence ID" value="ENSP00000398812.2"/>
    <property type="gene ID" value="ENSG00000223666.2"/>
</dbReference>
<dbReference type="Ensembl" id="ENST00000456854.2">
    <property type="protein sequence ID" value="ENSP00000412439.2"/>
    <property type="gene ID" value="ENSG00000224200.2"/>
</dbReference>
<dbReference type="GeneID" id="63943"/>
<dbReference type="KEGG" id="hsa:63943"/>
<dbReference type="MANE-Select" id="ENST00000375156.4">
    <property type="protein sequence ID" value="ENSP00000364298.3"/>
    <property type="RefSeq nucleotide sequence ID" value="NM_022110.4"/>
    <property type="RefSeq protein sequence ID" value="NP_071393.2"/>
</dbReference>
<dbReference type="UCSC" id="uc003nzr.4">
    <property type="organism name" value="human"/>
</dbReference>
<dbReference type="AGR" id="HGNC:13949"/>
<dbReference type="CTD" id="63943"/>
<dbReference type="DisGeNET" id="63943"/>
<dbReference type="GeneCards" id="FKBPL"/>
<dbReference type="HGNC" id="HGNC:13949">
    <property type="gene designation" value="FKBPL"/>
</dbReference>
<dbReference type="HPA" id="ENSG00000204315">
    <property type="expression patterns" value="Low tissue specificity"/>
</dbReference>
<dbReference type="MalaCards" id="FKBPL"/>
<dbReference type="neXtProt" id="NX_Q9UIM3"/>
<dbReference type="OpenTargets" id="ENSG00000204315"/>
<dbReference type="PharmGKB" id="PA28167"/>
<dbReference type="VEuPathDB" id="HostDB:ENSG00000204315"/>
<dbReference type="eggNOG" id="KOG1124">
    <property type="taxonomic scope" value="Eukaryota"/>
</dbReference>
<dbReference type="GeneTree" id="ENSGT00920000149187"/>
<dbReference type="HOGENOM" id="CLU_013615_13_0_1"/>
<dbReference type="InParanoid" id="Q9UIM3"/>
<dbReference type="OMA" id="WTELTIG"/>
<dbReference type="OrthoDB" id="433738at2759"/>
<dbReference type="PAN-GO" id="Q9UIM3">
    <property type="GO annotations" value="0 GO annotations based on evolutionary models"/>
</dbReference>
<dbReference type="PhylomeDB" id="Q9UIM3"/>
<dbReference type="TreeFam" id="TF105297"/>
<dbReference type="PathwayCommons" id="Q9UIM3"/>
<dbReference type="Reactome" id="R-HSA-8852276">
    <property type="pathway name" value="The role of GTSE1 in G2/M progression after G2 checkpoint"/>
</dbReference>
<dbReference type="SignaLink" id="Q9UIM3"/>
<dbReference type="BioGRID-ORCS" id="63943">
    <property type="hits" value="138 hits in 1152 CRISPR screens"/>
</dbReference>
<dbReference type="ChiTaRS" id="FKBPL">
    <property type="organism name" value="human"/>
</dbReference>
<dbReference type="GeneWiki" id="FKBPL"/>
<dbReference type="GenomeRNAi" id="63943"/>
<dbReference type="Pharos" id="Q9UIM3">
    <property type="development level" value="Tbio"/>
</dbReference>
<dbReference type="PRO" id="PR:Q9UIM3"/>
<dbReference type="Proteomes" id="UP000005640">
    <property type="component" value="Chromosome 6"/>
</dbReference>
<dbReference type="RNAct" id="Q9UIM3">
    <property type="molecule type" value="protein"/>
</dbReference>
<dbReference type="Bgee" id="ENSG00000204315">
    <property type="expression patterns" value="Expressed in male germ line stem cell (sensu Vertebrata) in testis and 99 other cell types or tissues"/>
</dbReference>
<dbReference type="ExpressionAtlas" id="Q9UIM3">
    <property type="expression patterns" value="baseline and differential"/>
</dbReference>
<dbReference type="GO" id="GO:0005829">
    <property type="term" value="C:cytosol"/>
    <property type="evidence" value="ECO:0000304"/>
    <property type="project" value="Reactome"/>
</dbReference>
<dbReference type="GO" id="GO:0005576">
    <property type="term" value="C:extracellular region"/>
    <property type="evidence" value="ECO:0000314"/>
    <property type="project" value="MGI"/>
</dbReference>
<dbReference type="GO" id="GO:1905553">
    <property type="term" value="P:regulation of blood vessel branching"/>
    <property type="evidence" value="ECO:0007669"/>
    <property type="project" value="Ensembl"/>
</dbReference>
<dbReference type="GO" id="GO:0009314">
    <property type="term" value="P:response to radiation"/>
    <property type="evidence" value="ECO:0000303"/>
    <property type="project" value="UniProtKB"/>
</dbReference>
<dbReference type="FunFam" id="1.25.40.10:FF:000251">
    <property type="entry name" value="FK506-binding protein-like isoform X1"/>
    <property type="match status" value="1"/>
</dbReference>
<dbReference type="Gene3D" id="1.25.40.10">
    <property type="entry name" value="Tetratricopeptide repeat domain"/>
    <property type="match status" value="1"/>
</dbReference>
<dbReference type="InterPro" id="IPR050754">
    <property type="entry name" value="FKBP4/5/8-like"/>
</dbReference>
<dbReference type="InterPro" id="IPR011990">
    <property type="entry name" value="TPR-like_helical_dom_sf"/>
</dbReference>
<dbReference type="InterPro" id="IPR019734">
    <property type="entry name" value="TPR_rpt"/>
</dbReference>
<dbReference type="PANTHER" id="PTHR46512:SF10">
    <property type="entry name" value="FK506-BINDING PROTEIN-LIKE"/>
    <property type="match status" value="1"/>
</dbReference>
<dbReference type="PANTHER" id="PTHR46512">
    <property type="entry name" value="PEPTIDYLPROLYL ISOMERASE"/>
    <property type="match status" value="1"/>
</dbReference>
<dbReference type="Pfam" id="PF00515">
    <property type="entry name" value="TPR_1"/>
    <property type="match status" value="1"/>
</dbReference>
<dbReference type="Pfam" id="PF13432">
    <property type="entry name" value="TPR_16"/>
    <property type="match status" value="1"/>
</dbReference>
<dbReference type="SMART" id="SM00028">
    <property type="entry name" value="TPR"/>
    <property type="match status" value="3"/>
</dbReference>
<dbReference type="SUPFAM" id="SSF54534">
    <property type="entry name" value="FKBP-like"/>
    <property type="match status" value="1"/>
</dbReference>
<dbReference type="SUPFAM" id="SSF48452">
    <property type="entry name" value="TPR-like"/>
    <property type="match status" value="1"/>
</dbReference>
<dbReference type="PROSITE" id="PS50005">
    <property type="entry name" value="TPR"/>
    <property type="match status" value="2"/>
</dbReference>
<dbReference type="PROSITE" id="PS50293">
    <property type="entry name" value="TPR_REGION"/>
    <property type="match status" value="1"/>
</dbReference>
<evidence type="ECO:0000256" key="1">
    <source>
        <dbReference type="SAM" id="MobiDB-lite"/>
    </source>
</evidence>
<evidence type="ECO:0000269" key="2">
    <source>
    </source>
</evidence>
<evidence type="ECO:0000269" key="3">
    <source>
    </source>
</evidence>
<evidence type="ECO:0000305" key="4"/>
<evidence type="ECO:0007744" key="5">
    <source>
    </source>
</evidence>
<feature type="chain" id="PRO_0000289878" description="FK506-binding protein-like">
    <location>
        <begin position="1"/>
        <end position="349"/>
    </location>
</feature>
<feature type="repeat" description="TPR 1">
    <location>
        <begin position="210"/>
        <end position="243"/>
    </location>
</feature>
<feature type="repeat" description="TPR 2">
    <location>
        <begin position="252"/>
        <end position="285"/>
    </location>
</feature>
<feature type="repeat" description="TPR 3">
    <location>
        <begin position="286"/>
        <end position="319"/>
    </location>
</feature>
<feature type="region of interest" description="Disordered" evidence="1">
    <location>
        <begin position="36"/>
        <end position="55"/>
    </location>
</feature>
<feature type="modified residue" description="Phosphothreonine" evidence="5">
    <location>
        <position position="3"/>
    </location>
</feature>
<feature type="sequence variant" id="VAR_061546" description="In dbSNP:rs28732176." evidence="2">
    <original>A</original>
    <variation>T</variation>
    <location>
        <position position="90"/>
    </location>
</feature>
<feature type="mutagenesis site" description="Abolishes HSP90AB1 binding; when associated with A-291." evidence="3">
    <original>K</original>
    <variation>A</variation>
    <location>
        <position position="287"/>
    </location>
</feature>
<feature type="mutagenesis site" description="Abolishes HSP90AB1 binding; when associated with A-287." evidence="3">
    <original>R</original>
    <variation>A</variation>
    <location>
        <position position="291"/>
    </location>
</feature>
<feature type="sequence conflict" description="In Ref. 7; CAG33655." evidence="4" ref="7">
    <original>T</original>
    <variation>I</variation>
    <location>
        <position position="203"/>
    </location>
</feature>